<reference key="1">
    <citation type="journal article" date="2008" name="PLoS ONE">
        <title>Genome sequence of a lancefield group C Streptococcus zooepidemicus strain causing epidemic nephritis: new information about an old disease.</title>
        <authorList>
            <person name="Beres S.B."/>
            <person name="Sesso R."/>
            <person name="Pinto S.W.L."/>
            <person name="Hoe N.P."/>
            <person name="Porcella S.F."/>
            <person name="Deleo F.R."/>
            <person name="Musser J.M."/>
        </authorList>
    </citation>
    <scope>NUCLEOTIDE SEQUENCE [LARGE SCALE GENOMIC DNA]</scope>
    <source>
        <strain>MGCS10565</strain>
    </source>
</reference>
<protein>
    <recommendedName>
        <fullName evidence="1">Phospho-N-acetylmuramoyl-pentapeptide-transferase</fullName>
        <ecNumber evidence="1">2.7.8.13</ecNumber>
    </recommendedName>
    <alternativeName>
        <fullName evidence="1">UDP-MurNAc-pentapeptide phosphotransferase</fullName>
    </alternativeName>
</protein>
<keyword id="KW-0131">Cell cycle</keyword>
<keyword id="KW-0132">Cell division</keyword>
<keyword id="KW-1003">Cell membrane</keyword>
<keyword id="KW-0133">Cell shape</keyword>
<keyword id="KW-0961">Cell wall biogenesis/degradation</keyword>
<keyword id="KW-0460">Magnesium</keyword>
<keyword id="KW-0472">Membrane</keyword>
<keyword id="KW-0479">Metal-binding</keyword>
<keyword id="KW-0573">Peptidoglycan synthesis</keyword>
<keyword id="KW-0808">Transferase</keyword>
<keyword id="KW-0812">Transmembrane</keyword>
<keyword id="KW-1133">Transmembrane helix</keyword>
<gene>
    <name evidence="1" type="primary">mraY</name>
    <name type="ordered locus">Sez_1585</name>
</gene>
<accession>B4U4K1</accession>
<feature type="chain" id="PRO_1000090674" description="Phospho-N-acetylmuramoyl-pentapeptide-transferase">
    <location>
        <begin position="1"/>
        <end position="335"/>
    </location>
</feature>
<feature type="transmembrane region" description="Helical" evidence="1">
    <location>
        <begin position="3"/>
        <end position="23"/>
    </location>
</feature>
<feature type="transmembrane region" description="Helical" evidence="1">
    <location>
        <begin position="53"/>
        <end position="73"/>
    </location>
</feature>
<feature type="transmembrane region" description="Helical" evidence="1">
    <location>
        <begin position="78"/>
        <end position="98"/>
    </location>
</feature>
<feature type="transmembrane region" description="Helical" evidence="1">
    <location>
        <begin position="118"/>
        <end position="138"/>
    </location>
</feature>
<feature type="transmembrane region" description="Helical" evidence="1">
    <location>
        <begin position="143"/>
        <end position="163"/>
    </location>
</feature>
<feature type="transmembrane region" description="Helical" evidence="1">
    <location>
        <begin position="174"/>
        <end position="194"/>
    </location>
</feature>
<feature type="transmembrane region" description="Helical" evidence="1">
    <location>
        <begin position="200"/>
        <end position="220"/>
    </location>
</feature>
<feature type="transmembrane region" description="Helical" evidence="1">
    <location>
        <begin position="226"/>
        <end position="246"/>
    </location>
</feature>
<feature type="transmembrane region" description="Helical" evidence="1">
    <location>
        <begin position="251"/>
        <end position="271"/>
    </location>
</feature>
<feature type="transmembrane region" description="Helical" evidence="1">
    <location>
        <begin position="314"/>
        <end position="334"/>
    </location>
</feature>
<comment type="function">
    <text evidence="1">Catalyzes the initial step of the lipid cycle reactions in the biosynthesis of the cell wall peptidoglycan: transfers peptidoglycan precursor phospho-MurNAc-pentapeptide from UDP-MurNAc-pentapeptide onto the lipid carrier undecaprenyl phosphate, yielding undecaprenyl-pyrophosphoryl-MurNAc-pentapeptide, known as lipid I.</text>
</comment>
<comment type="catalytic activity">
    <reaction evidence="1">
        <text>UDP-N-acetyl-alpha-D-muramoyl-L-alanyl-gamma-D-glutamyl-L-lysyl-D-alanyl-D-alanine + di-trans,octa-cis-undecaprenyl phosphate = Mur2Ac(oyl-L-Ala-gamma-D-Glu-L-Lys-D-Ala-D-Ala)-di-trans,octa-cis-undecaprenyl diphosphate + UMP</text>
        <dbReference type="Rhea" id="RHEA:21920"/>
        <dbReference type="ChEBI" id="CHEBI:57865"/>
        <dbReference type="ChEBI" id="CHEBI:60032"/>
        <dbReference type="ChEBI" id="CHEBI:60392"/>
        <dbReference type="ChEBI" id="CHEBI:70758"/>
        <dbReference type="EC" id="2.7.8.13"/>
    </reaction>
</comment>
<comment type="cofactor">
    <cofactor evidence="1">
        <name>Mg(2+)</name>
        <dbReference type="ChEBI" id="CHEBI:18420"/>
    </cofactor>
</comment>
<comment type="pathway">
    <text evidence="1">Cell wall biogenesis; peptidoglycan biosynthesis.</text>
</comment>
<comment type="subcellular location">
    <subcellularLocation>
        <location evidence="1">Cell membrane</location>
        <topology evidence="1">Multi-pass membrane protein</topology>
    </subcellularLocation>
</comment>
<comment type="similarity">
    <text evidence="1">Belongs to the glycosyltransferase 4 family. MraY subfamily.</text>
</comment>
<organism>
    <name type="scientific">Streptococcus equi subsp. zooepidemicus (strain MGCS10565)</name>
    <dbReference type="NCBI Taxonomy" id="552526"/>
    <lineage>
        <taxon>Bacteria</taxon>
        <taxon>Bacillati</taxon>
        <taxon>Bacillota</taxon>
        <taxon>Bacilli</taxon>
        <taxon>Lactobacillales</taxon>
        <taxon>Streptococcaceae</taxon>
        <taxon>Streptococcus</taxon>
    </lineage>
</organism>
<proteinExistence type="inferred from homology"/>
<evidence type="ECO:0000255" key="1">
    <source>
        <dbReference type="HAMAP-Rule" id="MF_00038"/>
    </source>
</evidence>
<sequence>MFLTILAGLIAFAVTALAMPHFIRLYQLKKIGGQQMHEDVKQHLAKAGTPTMGGTVFLLVATSLSFVFALVYFRDGQSLGLISGILLIVLIYGIIGFLDDFLKIFKQVNEGLTAKQKFTLQIVGGLVFYVIHVMPSGIDAINVFGYHWHLGFLYLCFVLFWVVGFSNAVNLTDGIDGLASVSVVISLLAYGVIAYAQGQFDVLLLIGIMVGALLAFFLFNHKPAKIFMGDVGSLALGAMLAAISIALRQEWTLLVIGIVYVLETSSVMLQVTYFKYTKKKYGEGRRIFRMTPFHHHLELGGLSGKAAKWSEWKVDAFLWALGLVASLIVLAILYL</sequence>
<dbReference type="EC" id="2.7.8.13" evidence="1"/>
<dbReference type="EMBL" id="CP001129">
    <property type="protein sequence ID" value="ACG62918.1"/>
    <property type="molecule type" value="Genomic_DNA"/>
</dbReference>
<dbReference type="RefSeq" id="WP_012516174.1">
    <property type="nucleotide sequence ID" value="NC_011134.1"/>
</dbReference>
<dbReference type="SMR" id="B4U4K1"/>
<dbReference type="KEGG" id="sez:Sez_1585"/>
<dbReference type="PATRIC" id="fig|40041.11.peg.406"/>
<dbReference type="HOGENOM" id="CLU_023982_0_1_9"/>
<dbReference type="UniPathway" id="UPA00219"/>
<dbReference type="Proteomes" id="UP000001873">
    <property type="component" value="Chromosome"/>
</dbReference>
<dbReference type="GO" id="GO:0005886">
    <property type="term" value="C:plasma membrane"/>
    <property type="evidence" value="ECO:0007669"/>
    <property type="project" value="UniProtKB-SubCell"/>
</dbReference>
<dbReference type="GO" id="GO:0046872">
    <property type="term" value="F:metal ion binding"/>
    <property type="evidence" value="ECO:0007669"/>
    <property type="project" value="UniProtKB-KW"/>
</dbReference>
<dbReference type="GO" id="GO:0008963">
    <property type="term" value="F:phospho-N-acetylmuramoyl-pentapeptide-transferase activity"/>
    <property type="evidence" value="ECO:0007669"/>
    <property type="project" value="UniProtKB-UniRule"/>
</dbReference>
<dbReference type="GO" id="GO:0051301">
    <property type="term" value="P:cell division"/>
    <property type="evidence" value="ECO:0007669"/>
    <property type="project" value="UniProtKB-KW"/>
</dbReference>
<dbReference type="GO" id="GO:0071555">
    <property type="term" value="P:cell wall organization"/>
    <property type="evidence" value="ECO:0007669"/>
    <property type="project" value="UniProtKB-KW"/>
</dbReference>
<dbReference type="GO" id="GO:0009252">
    <property type="term" value="P:peptidoglycan biosynthetic process"/>
    <property type="evidence" value="ECO:0007669"/>
    <property type="project" value="UniProtKB-UniRule"/>
</dbReference>
<dbReference type="GO" id="GO:0008360">
    <property type="term" value="P:regulation of cell shape"/>
    <property type="evidence" value="ECO:0007669"/>
    <property type="project" value="UniProtKB-KW"/>
</dbReference>
<dbReference type="CDD" id="cd06852">
    <property type="entry name" value="GT_MraY"/>
    <property type="match status" value="1"/>
</dbReference>
<dbReference type="HAMAP" id="MF_00038">
    <property type="entry name" value="MraY"/>
    <property type="match status" value="1"/>
</dbReference>
<dbReference type="InterPro" id="IPR000715">
    <property type="entry name" value="Glycosyl_transferase_4"/>
</dbReference>
<dbReference type="InterPro" id="IPR003524">
    <property type="entry name" value="PNAcMuramoyl-5peptid_Trfase"/>
</dbReference>
<dbReference type="InterPro" id="IPR018480">
    <property type="entry name" value="PNAcMuramoyl-5peptid_Trfase_CS"/>
</dbReference>
<dbReference type="NCBIfam" id="TIGR00445">
    <property type="entry name" value="mraY"/>
    <property type="match status" value="1"/>
</dbReference>
<dbReference type="PANTHER" id="PTHR22926">
    <property type="entry name" value="PHOSPHO-N-ACETYLMURAMOYL-PENTAPEPTIDE-TRANSFERASE"/>
    <property type="match status" value="1"/>
</dbReference>
<dbReference type="PANTHER" id="PTHR22926:SF5">
    <property type="entry name" value="PHOSPHO-N-ACETYLMURAMOYL-PENTAPEPTIDE-TRANSFERASE HOMOLOG"/>
    <property type="match status" value="1"/>
</dbReference>
<dbReference type="Pfam" id="PF00953">
    <property type="entry name" value="Glycos_transf_4"/>
    <property type="match status" value="1"/>
</dbReference>
<dbReference type="Pfam" id="PF10555">
    <property type="entry name" value="MraY_sig1"/>
    <property type="match status" value="1"/>
</dbReference>
<dbReference type="PROSITE" id="PS01348">
    <property type="entry name" value="MRAY_2"/>
    <property type="match status" value="1"/>
</dbReference>
<name>MRAY_STREM</name>